<gene>
    <name evidence="1" type="primary">argH</name>
    <name type="ordered locus">Cagg_0264</name>
</gene>
<sequence length="462" mass="51335">MEHRLWGGRFSEPTAAEMRRFNDSFRFDRRLADVDITGSIAWAGALAQAGLIDEDEYAALVRGLELVRAEFANGTFVPAEGDEDIHTAVERRLRELIGDAALKLHTGRSRNDQVATDMRLYTIGIARQLDRRLRDLQLALLTQAELHTDTLMPGYTHLQRAQPITFGHWCLAYIEMFARDRSRLRDAITRMRVLPLGAGALAGNALGIERERLTELLDEFDELAANSLDAVSDRDFVAEILFICALIGIHLSRLAEDIILYASAEFGFIELADAYSTGSSLMPQKKNPDSMELLRGKSGRLLGNVVTLLTVLKGLPLTYNKDMQEDKEPLFDSFDTLDLGLQVAAAALATMTVHPERMAAALDDAMLATDLADELVRRGIPFRVAHGKVGQLVRRAQTLGVSLRHLPLTEYQAVEPSLDAGVYAIFDMARSVAQKASYGGTAPQRVREQCRRWRTILVESEA</sequence>
<feature type="chain" id="PRO_1000116313" description="Argininosuccinate lyase">
    <location>
        <begin position="1"/>
        <end position="462"/>
    </location>
</feature>
<comment type="catalytic activity">
    <reaction evidence="1">
        <text>2-(N(omega)-L-arginino)succinate = fumarate + L-arginine</text>
        <dbReference type="Rhea" id="RHEA:24020"/>
        <dbReference type="ChEBI" id="CHEBI:29806"/>
        <dbReference type="ChEBI" id="CHEBI:32682"/>
        <dbReference type="ChEBI" id="CHEBI:57472"/>
        <dbReference type="EC" id="4.3.2.1"/>
    </reaction>
</comment>
<comment type="pathway">
    <text evidence="1">Amino-acid biosynthesis; L-arginine biosynthesis; L-arginine from L-ornithine and carbamoyl phosphate: step 3/3.</text>
</comment>
<comment type="subcellular location">
    <subcellularLocation>
        <location evidence="1">Cytoplasm</location>
    </subcellularLocation>
</comment>
<comment type="similarity">
    <text evidence="1">Belongs to the lyase 1 family. Argininosuccinate lyase subfamily.</text>
</comment>
<reference key="1">
    <citation type="submission" date="2008-12" db="EMBL/GenBank/DDBJ databases">
        <title>Complete sequence of Chloroflexus aggregans DSM 9485.</title>
        <authorList>
            <consortium name="US DOE Joint Genome Institute"/>
            <person name="Lucas S."/>
            <person name="Copeland A."/>
            <person name="Lapidus A."/>
            <person name="Glavina del Rio T."/>
            <person name="Dalin E."/>
            <person name="Tice H."/>
            <person name="Pitluck S."/>
            <person name="Foster B."/>
            <person name="Larimer F."/>
            <person name="Land M."/>
            <person name="Hauser L."/>
            <person name="Kyrpides N."/>
            <person name="Mikhailova N."/>
            <person name="Bryant D.A."/>
            <person name="Richardson P."/>
        </authorList>
    </citation>
    <scope>NUCLEOTIDE SEQUENCE [LARGE SCALE GENOMIC DNA]</scope>
    <source>
        <strain>MD-66 / DSM 9485</strain>
    </source>
</reference>
<name>ARLY_CHLAD</name>
<protein>
    <recommendedName>
        <fullName evidence="1">Argininosuccinate lyase</fullName>
        <shortName evidence="1">ASAL</shortName>
        <ecNumber evidence="1">4.3.2.1</ecNumber>
    </recommendedName>
    <alternativeName>
        <fullName evidence="1">Arginosuccinase</fullName>
    </alternativeName>
</protein>
<organism>
    <name type="scientific">Chloroflexus aggregans (strain MD-66 / DSM 9485)</name>
    <dbReference type="NCBI Taxonomy" id="326427"/>
    <lineage>
        <taxon>Bacteria</taxon>
        <taxon>Bacillati</taxon>
        <taxon>Chloroflexota</taxon>
        <taxon>Chloroflexia</taxon>
        <taxon>Chloroflexales</taxon>
        <taxon>Chloroflexineae</taxon>
        <taxon>Chloroflexaceae</taxon>
        <taxon>Chloroflexus</taxon>
    </lineage>
</organism>
<dbReference type="EC" id="4.3.2.1" evidence="1"/>
<dbReference type="EMBL" id="CP001337">
    <property type="protein sequence ID" value="ACL23212.1"/>
    <property type="molecule type" value="Genomic_DNA"/>
</dbReference>
<dbReference type="RefSeq" id="WP_012615578.1">
    <property type="nucleotide sequence ID" value="NC_011831.1"/>
</dbReference>
<dbReference type="SMR" id="B8GD12"/>
<dbReference type="STRING" id="326427.Cagg_0264"/>
<dbReference type="KEGG" id="cag:Cagg_0264"/>
<dbReference type="eggNOG" id="COG0165">
    <property type="taxonomic scope" value="Bacteria"/>
</dbReference>
<dbReference type="HOGENOM" id="CLU_027272_2_3_0"/>
<dbReference type="OrthoDB" id="9769623at2"/>
<dbReference type="UniPathway" id="UPA00068">
    <property type="reaction ID" value="UER00114"/>
</dbReference>
<dbReference type="Proteomes" id="UP000002508">
    <property type="component" value="Chromosome"/>
</dbReference>
<dbReference type="GO" id="GO:0005829">
    <property type="term" value="C:cytosol"/>
    <property type="evidence" value="ECO:0007669"/>
    <property type="project" value="TreeGrafter"/>
</dbReference>
<dbReference type="GO" id="GO:0004056">
    <property type="term" value="F:argininosuccinate lyase activity"/>
    <property type="evidence" value="ECO:0007669"/>
    <property type="project" value="UniProtKB-UniRule"/>
</dbReference>
<dbReference type="GO" id="GO:0042450">
    <property type="term" value="P:arginine biosynthetic process via ornithine"/>
    <property type="evidence" value="ECO:0007669"/>
    <property type="project" value="InterPro"/>
</dbReference>
<dbReference type="GO" id="GO:0006526">
    <property type="term" value="P:L-arginine biosynthetic process"/>
    <property type="evidence" value="ECO:0007669"/>
    <property type="project" value="UniProtKB-UniRule"/>
</dbReference>
<dbReference type="CDD" id="cd01359">
    <property type="entry name" value="Argininosuccinate_lyase"/>
    <property type="match status" value="1"/>
</dbReference>
<dbReference type="FunFam" id="1.10.275.10:FF:000002">
    <property type="entry name" value="Argininosuccinate lyase"/>
    <property type="match status" value="1"/>
</dbReference>
<dbReference type="FunFam" id="1.10.40.30:FF:000001">
    <property type="entry name" value="Argininosuccinate lyase"/>
    <property type="match status" value="1"/>
</dbReference>
<dbReference type="FunFam" id="1.20.200.10:FF:000002">
    <property type="entry name" value="Argininosuccinate lyase"/>
    <property type="match status" value="1"/>
</dbReference>
<dbReference type="Gene3D" id="1.10.40.30">
    <property type="entry name" value="Fumarase/aspartase (C-terminal domain)"/>
    <property type="match status" value="1"/>
</dbReference>
<dbReference type="Gene3D" id="1.20.200.10">
    <property type="entry name" value="Fumarase/aspartase (Central domain)"/>
    <property type="match status" value="1"/>
</dbReference>
<dbReference type="Gene3D" id="1.10.275.10">
    <property type="entry name" value="Fumarase/aspartase (N-terminal domain)"/>
    <property type="match status" value="1"/>
</dbReference>
<dbReference type="HAMAP" id="MF_00006">
    <property type="entry name" value="Arg_succ_lyase"/>
    <property type="match status" value="1"/>
</dbReference>
<dbReference type="InterPro" id="IPR029419">
    <property type="entry name" value="Arg_succ_lyase_C"/>
</dbReference>
<dbReference type="InterPro" id="IPR009049">
    <property type="entry name" value="Argininosuccinate_lyase"/>
</dbReference>
<dbReference type="InterPro" id="IPR024083">
    <property type="entry name" value="Fumarase/histidase_N"/>
</dbReference>
<dbReference type="InterPro" id="IPR020557">
    <property type="entry name" value="Fumarate_lyase_CS"/>
</dbReference>
<dbReference type="InterPro" id="IPR000362">
    <property type="entry name" value="Fumarate_lyase_fam"/>
</dbReference>
<dbReference type="InterPro" id="IPR022761">
    <property type="entry name" value="Fumarate_lyase_N"/>
</dbReference>
<dbReference type="InterPro" id="IPR008948">
    <property type="entry name" value="L-Aspartase-like"/>
</dbReference>
<dbReference type="NCBIfam" id="TIGR00838">
    <property type="entry name" value="argH"/>
    <property type="match status" value="1"/>
</dbReference>
<dbReference type="PANTHER" id="PTHR43814">
    <property type="entry name" value="ARGININOSUCCINATE LYASE"/>
    <property type="match status" value="1"/>
</dbReference>
<dbReference type="PANTHER" id="PTHR43814:SF1">
    <property type="entry name" value="ARGININOSUCCINATE LYASE"/>
    <property type="match status" value="1"/>
</dbReference>
<dbReference type="Pfam" id="PF14698">
    <property type="entry name" value="ASL_C2"/>
    <property type="match status" value="1"/>
</dbReference>
<dbReference type="Pfam" id="PF00206">
    <property type="entry name" value="Lyase_1"/>
    <property type="match status" value="1"/>
</dbReference>
<dbReference type="PRINTS" id="PR00145">
    <property type="entry name" value="ARGSUCLYASE"/>
</dbReference>
<dbReference type="PRINTS" id="PR00149">
    <property type="entry name" value="FUMRATELYASE"/>
</dbReference>
<dbReference type="SUPFAM" id="SSF48557">
    <property type="entry name" value="L-aspartase-like"/>
    <property type="match status" value="1"/>
</dbReference>
<dbReference type="PROSITE" id="PS00163">
    <property type="entry name" value="FUMARATE_LYASES"/>
    <property type="match status" value="1"/>
</dbReference>
<proteinExistence type="inferred from homology"/>
<keyword id="KW-0028">Amino-acid biosynthesis</keyword>
<keyword id="KW-0055">Arginine biosynthesis</keyword>
<keyword id="KW-0963">Cytoplasm</keyword>
<keyword id="KW-0456">Lyase</keyword>
<evidence type="ECO:0000255" key="1">
    <source>
        <dbReference type="HAMAP-Rule" id="MF_00006"/>
    </source>
</evidence>
<accession>B8GD12</accession>